<organism>
    <name type="scientific">Trieres chinensis</name>
    <name type="common">Marine centric diatom</name>
    <name type="synonym">Odontella sinensis</name>
    <dbReference type="NCBI Taxonomy" id="1514140"/>
    <lineage>
        <taxon>Eukaryota</taxon>
        <taxon>Sar</taxon>
        <taxon>Stramenopiles</taxon>
        <taxon>Ochrophyta</taxon>
        <taxon>Bacillariophyta</taxon>
        <taxon>Mediophyceae</taxon>
        <taxon>Biddulphiophycidae</taxon>
        <taxon>Eupodiscales</taxon>
        <taxon>Parodontellaceae</taxon>
        <taxon>Trieres</taxon>
    </lineage>
</organism>
<proteinExistence type="inferred from homology"/>
<keyword id="KW-0150">Chloroplast</keyword>
<keyword id="KW-0934">Plastid</keyword>
<keyword id="KW-0687">Ribonucleoprotein</keyword>
<keyword id="KW-0689">Ribosomal protein</keyword>
<keyword id="KW-0694">RNA-binding</keyword>
<keyword id="KW-0699">rRNA-binding</keyword>
<gene>
    <name type="primary">rpl3</name>
</gene>
<evidence type="ECO:0000250" key="1"/>
<evidence type="ECO:0000256" key="2">
    <source>
        <dbReference type="SAM" id="MobiDB-lite"/>
    </source>
</evidence>
<evidence type="ECO:0000305" key="3"/>
<dbReference type="EMBL" id="Z67753">
    <property type="protein sequence ID" value="CAA91649.1"/>
    <property type="status" value="ALT_INIT"/>
    <property type="molecule type" value="Genomic_DNA"/>
</dbReference>
<dbReference type="PIR" id="S78276">
    <property type="entry name" value="S78276"/>
</dbReference>
<dbReference type="RefSeq" id="NP_043617.2">
    <property type="nucleotide sequence ID" value="NC_001713.1"/>
</dbReference>
<dbReference type="SMR" id="P49569"/>
<dbReference type="GeneID" id="801768"/>
<dbReference type="GO" id="GO:0009507">
    <property type="term" value="C:chloroplast"/>
    <property type="evidence" value="ECO:0007669"/>
    <property type="project" value="UniProtKB-SubCell"/>
</dbReference>
<dbReference type="GO" id="GO:0022625">
    <property type="term" value="C:cytosolic large ribosomal subunit"/>
    <property type="evidence" value="ECO:0007669"/>
    <property type="project" value="TreeGrafter"/>
</dbReference>
<dbReference type="GO" id="GO:0019843">
    <property type="term" value="F:rRNA binding"/>
    <property type="evidence" value="ECO:0007669"/>
    <property type="project" value="UniProtKB-UniRule"/>
</dbReference>
<dbReference type="GO" id="GO:0003735">
    <property type="term" value="F:structural constituent of ribosome"/>
    <property type="evidence" value="ECO:0007669"/>
    <property type="project" value="InterPro"/>
</dbReference>
<dbReference type="GO" id="GO:0006412">
    <property type="term" value="P:translation"/>
    <property type="evidence" value="ECO:0007669"/>
    <property type="project" value="UniProtKB-UniRule"/>
</dbReference>
<dbReference type="FunFam" id="3.30.160.810:FF:000001">
    <property type="entry name" value="50S ribosomal protein L3"/>
    <property type="match status" value="1"/>
</dbReference>
<dbReference type="FunFam" id="2.40.30.10:FF:000065">
    <property type="entry name" value="50S ribosomal protein L3, chloroplastic"/>
    <property type="match status" value="1"/>
</dbReference>
<dbReference type="Gene3D" id="3.30.160.810">
    <property type="match status" value="1"/>
</dbReference>
<dbReference type="Gene3D" id="2.40.30.10">
    <property type="entry name" value="Translation factors"/>
    <property type="match status" value="1"/>
</dbReference>
<dbReference type="HAMAP" id="MF_01325_B">
    <property type="entry name" value="Ribosomal_uL3_B"/>
    <property type="match status" value="1"/>
</dbReference>
<dbReference type="InterPro" id="IPR000597">
    <property type="entry name" value="Ribosomal_uL3"/>
</dbReference>
<dbReference type="InterPro" id="IPR019927">
    <property type="entry name" value="Ribosomal_uL3_bac/org-type"/>
</dbReference>
<dbReference type="InterPro" id="IPR019926">
    <property type="entry name" value="Ribosomal_uL3_CS"/>
</dbReference>
<dbReference type="InterPro" id="IPR009000">
    <property type="entry name" value="Transl_B-barrel_sf"/>
</dbReference>
<dbReference type="NCBIfam" id="TIGR03625">
    <property type="entry name" value="L3_bact"/>
    <property type="match status" value="1"/>
</dbReference>
<dbReference type="PANTHER" id="PTHR11229">
    <property type="entry name" value="50S RIBOSOMAL PROTEIN L3"/>
    <property type="match status" value="1"/>
</dbReference>
<dbReference type="PANTHER" id="PTHR11229:SF16">
    <property type="entry name" value="LARGE RIBOSOMAL SUBUNIT PROTEIN UL3C"/>
    <property type="match status" value="1"/>
</dbReference>
<dbReference type="Pfam" id="PF00297">
    <property type="entry name" value="Ribosomal_L3"/>
    <property type="match status" value="1"/>
</dbReference>
<dbReference type="SUPFAM" id="SSF50447">
    <property type="entry name" value="Translation proteins"/>
    <property type="match status" value="1"/>
</dbReference>
<dbReference type="PROSITE" id="PS00474">
    <property type="entry name" value="RIBOSOMAL_L3"/>
    <property type="match status" value="1"/>
</dbReference>
<sequence length="207" mass="22141">MSLGLLGNKIGMTQIFDESGNIIPVTILKVGPCVITQVKTDLNDGYNAIQIGYGTVSNKSLTQPELGHLQKSNIQPLKYLKEFRVNNPEEFKVGQVVNVESLSTGQFIDVTGKSSGKGFSGLQKRHNFTRGPMTHGSKNHRAPGSIGMGTTPGRVLPGKKMAGQLGNKVTKTKKLKIIQVNGNENILVVKGSVPGKPGNLVTIHVSN</sequence>
<protein>
    <recommendedName>
        <fullName evidence="3">Large ribosomal subunit protein uL3c</fullName>
    </recommendedName>
    <alternativeName>
        <fullName>50S ribosomal protein L3, chloroplastic</fullName>
    </alternativeName>
</protein>
<comment type="function">
    <text evidence="1">One of the primary rRNA binding proteins, it binds directly near the 3'-end of the 23S rRNA, where it nucleates assembly of the 50S subunit.</text>
</comment>
<comment type="subunit">
    <text>Part of the 50S ribosomal subunit.</text>
</comment>
<comment type="subcellular location">
    <subcellularLocation>
        <location>Plastid</location>
        <location>Chloroplast</location>
    </subcellularLocation>
</comment>
<comment type="similarity">
    <text evidence="3">Belongs to the universal ribosomal protein uL3 family.</text>
</comment>
<comment type="sequence caution" evidence="3">
    <conflict type="erroneous initiation">
        <sequence resource="EMBL-CDS" id="CAA91649"/>
    </conflict>
</comment>
<reference key="1">
    <citation type="journal article" date="1995" name="Plant Mol. Biol. Rep.">
        <title>The chloroplast genome of a chlorophyll a+c-containing alga, Odontella sinensis.</title>
        <authorList>
            <person name="Kowallik K.V."/>
            <person name="Stoebe B."/>
            <person name="Schaffran I."/>
            <person name="Kroth-Pancic P."/>
            <person name="Freier U."/>
        </authorList>
    </citation>
    <scope>NUCLEOTIDE SEQUENCE [LARGE SCALE GENOMIC DNA]</scope>
</reference>
<feature type="chain" id="PRO_0000077203" description="Large ribosomal subunit protein uL3c">
    <location>
        <begin position="1"/>
        <end position="207"/>
    </location>
</feature>
<feature type="region of interest" description="Disordered" evidence="2">
    <location>
        <begin position="128"/>
        <end position="148"/>
    </location>
</feature>
<name>RK3_TRICV</name>
<accession>P49569</accession>
<geneLocation type="chloroplast"/>